<comment type="function">
    <text evidence="1">DNA-dependent RNA polymerase catalyzes the transcription of DNA into RNA using the four ribonucleoside triphosphates as substrates.</text>
</comment>
<comment type="catalytic activity">
    <reaction evidence="1">
        <text>RNA(n) + a ribonucleoside 5'-triphosphate = RNA(n+1) + diphosphate</text>
        <dbReference type="Rhea" id="RHEA:21248"/>
        <dbReference type="Rhea" id="RHEA-COMP:14527"/>
        <dbReference type="Rhea" id="RHEA-COMP:17342"/>
        <dbReference type="ChEBI" id="CHEBI:33019"/>
        <dbReference type="ChEBI" id="CHEBI:61557"/>
        <dbReference type="ChEBI" id="CHEBI:140395"/>
        <dbReference type="EC" id="2.7.7.6"/>
    </reaction>
</comment>
<comment type="subunit">
    <text evidence="1">The RNAP catalytic core consists of 2 alpha, 1 beta, 1 beta' and 1 omega subunit. When a sigma factor is associated with the core the holoenzyme is formed, which can initiate transcription.</text>
</comment>
<comment type="similarity">
    <text evidence="1">Belongs to the RNA polymerase beta chain family.</text>
</comment>
<accession>A5IJW3</accession>
<evidence type="ECO:0000255" key="1">
    <source>
        <dbReference type="HAMAP-Rule" id="MF_01321"/>
    </source>
</evidence>
<sequence>MKEISCGRRTRVSFGKTQEPLPIPDLVEIQKISYRRFLEEGLLEVLKKFSPIYSQATRSDLKKSDRGFALEFVSTRIGEPVVDPLECKAKGLTYSVPIYATARLTDMKSGEMKEEEVFLGYIPYMTDRGTFIINGAERVVVNQIVVSPGLYFSSEYIDREEYGGYFLPSRGAWLEVILDPYDGVLYAGLDGKKVNLFLFLKTIGYEKDEDILSLYPTYLDADDEDSLLLHVGSILLEDIYDGDRKIAEKWDILTKDLAERILMIDDINQIKIVHPIAQNTFEKMLELVSSSGEEGEEEEEKTKIYGLNEVTVVDAYLEIFRRLRPEELPRINAAKRYLHDLFFNPERYDLSEVGRYKVNERLRNAYIRYLIEVEGEDPEEARKKVYNENSLVLKPLDIVLASRILFDYFERRYVNDFEIDSYELRNLIRIFKEEYLEKRKTASYDLRKLVSVFRRNYGVTSDLSVLAAIRYISNINKELPSIPFDTKDHLGNKRVRTVGELVQREFERLFARAQKAIQERLTLINSLSKVSIQSLINIKSIISTVNQFFAMNQLSQFMDQVNPLSELTHKRRVSAVGPGGLRRESKVFEARNVHYSQYGRLCPIETPEGANIGFITSLAIYTKIDEYGFLMTPYRKVVNGKVTDEVVYLRANEEEDFKIVPATTPVDEEGNIIPERVVARVGEDIRLVPREEVDFMDVSTKQPFSVSASLIPFLEHDDASRALMGSNMQRQAVPLLKAEAPFVGTGMEWEAAKNSGYVTLAEHDGIVKEVDAARIVVHRTDENGNLMYDDKGNPVVDEYRLLKFVRSNQDTMINQKPIVNEGDFVKKGDPIADGPATDMGELALGRNILVAFMPWEGYNYEDAILVSQELLEEDVFTSIHIEVYETQARETRLGPEEITADIPNVSKELLKNLDENGIIRVGAYVVSDYGVGSQAILVGKVTPKGEGDTTPEEKIIRSVFGERGRDVKDTSLRLPHGVEGRVIRVDVYDQNDIAELGAGVLKLVRVYVASRKTLDIGDKLAGRHGNKGVVSNILPKEDMPFLPDGTPVQMVLNPLGIPSRMNVGQILETHLGWLAKLTGKWFATPVFEGAKEDEILRPLYEERKKRGLHLGDDENNPNGKVVLRDGRTGEPFDNPVVVGYMYMLKLVHIAKEKIHARSTGPYSLIHQQPLGGKSHFGGQRLGEMEVWALEAYGAAHTLAEMLTIKSDDIKGRNEAYKAILKNMNIPEPGVPESFRVLIKELRGLALDVRLYDENGNEIDIDKY</sequence>
<dbReference type="EC" id="2.7.7.6" evidence="1"/>
<dbReference type="EMBL" id="CP000702">
    <property type="protein sequence ID" value="ABQ46486.1"/>
    <property type="molecule type" value="Genomic_DNA"/>
</dbReference>
<dbReference type="RefSeq" id="WP_011943104.1">
    <property type="nucleotide sequence ID" value="NC_009486.1"/>
</dbReference>
<dbReference type="SMR" id="A5IJW3"/>
<dbReference type="STRING" id="390874.Tpet_0462"/>
<dbReference type="KEGG" id="tpt:Tpet_0462"/>
<dbReference type="eggNOG" id="COG0085">
    <property type="taxonomic scope" value="Bacteria"/>
</dbReference>
<dbReference type="HOGENOM" id="CLU_000524_4_1_0"/>
<dbReference type="Proteomes" id="UP000006558">
    <property type="component" value="Chromosome"/>
</dbReference>
<dbReference type="GO" id="GO:0000428">
    <property type="term" value="C:DNA-directed RNA polymerase complex"/>
    <property type="evidence" value="ECO:0007669"/>
    <property type="project" value="UniProtKB-KW"/>
</dbReference>
<dbReference type="GO" id="GO:0003677">
    <property type="term" value="F:DNA binding"/>
    <property type="evidence" value="ECO:0007669"/>
    <property type="project" value="UniProtKB-UniRule"/>
</dbReference>
<dbReference type="GO" id="GO:0003899">
    <property type="term" value="F:DNA-directed RNA polymerase activity"/>
    <property type="evidence" value="ECO:0007669"/>
    <property type="project" value="UniProtKB-UniRule"/>
</dbReference>
<dbReference type="GO" id="GO:0032549">
    <property type="term" value="F:ribonucleoside binding"/>
    <property type="evidence" value="ECO:0007669"/>
    <property type="project" value="InterPro"/>
</dbReference>
<dbReference type="GO" id="GO:0006351">
    <property type="term" value="P:DNA-templated transcription"/>
    <property type="evidence" value="ECO:0007669"/>
    <property type="project" value="UniProtKB-UniRule"/>
</dbReference>
<dbReference type="CDD" id="cd00653">
    <property type="entry name" value="RNA_pol_B_RPB2"/>
    <property type="match status" value="1"/>
</dbReference>
<dbReference type="Gene3D" id="2.40.50.100">
    <property type="match status" value="1"/>
</dbReference>
<dbReference type="Gene3D" id="3.90.1100.10">
    <property type="match status" value="2"/>
</dbReference>
<dbReference type="Gene3D" id="2.30.150.10">
    <property type="entry name" value="DNA-directed RNA polymerase, beta subunit, external 1 domain"/>
    <property type="match status" value="1"/>
</dbReference>
<dbReference type="Gene3D" id="2.40.270.10">
    <property type="entry name" value="DNA-directed RNA polymerase, subunit 2, domain 6"/>
    <property type="match status" value="2"/>
</dbReference>
<dbReference type="Gene3D" id="3.90.1800.10">
    <property type="entry name" value="RNA polymerase alpha subunit dimerisation domain"/>
    <property type="match status" value="1"/>
</dbReference>
<dbReference type="HAMAP" id="MF_01321">
    <property type="entry name" value="RNApol_bact_RpoB"/>
    <property type="match status" value="1"/>
</dbReference>
<dbReference type="InterPro" id="IPR042107">
    <property type="entry name" value="DNA-dir_RNA_pol_bsu_ext_1_sf"/>
</dbReference>
<dbReference type="InterPro" id="IPR019462">
    <property type="entry name" value="DNA-dir_RNA_pol_bsu_external_1"/>
</dbReference>
<dbReference type="InterPro" id="IPR015712">
    <property type="entry name" value="DNA-dir_RNA_pol_su2"/>
</dbReference>
<dbReference type="InterPro" id="IPR007120">
    <property type="entry name" value="DNA-dir_RNAP_su2_dom"/>
</dbReference>
<dbReference type="InterPro" id="IPR037033">
    <property type="entry name" value="DNA-dir_RNAP_su2_hyb_sf"/>
</dbReference>
<dbReference type="InterPro" id="IPR010243">
    <property type="entry name" value="RNA_pol_bsu_bac"/>
</dbReference>
<dbReference type="InterPro" id="IPR007121">
    <property type="entry name" value="RNA_pol_bsu_CS"/>
</dbReference>
<dbReference type="InterPro" id="IPR007644">
    <property type="entry name" value="RNA_pol_bsu_protrusion"/>
</dbReference>
<dbReference type="InterPro" id="IPR007645">
    <property type="entry name" value="RNA_pol_Rpb2_3"/>
</dbReference>
<dbReference type="InterPro" id="IPR007641">
    <property type="entry name" value="RNA_pol_Rpb2_7"/>
</dbReference>
<dbReference type="NCBIfam" id="NF001616">
    <property type="entry name" value="PRK00405.1"/>
    <property type="match status" value="1"/>
</dbReference>
<dbReference type="NCBIfam" id="TIGR02013">
    <property type="entry name" value="rpoB"/>
    <property type="match status" value="1"/>
</dbReference>
<dbReference type="PANTHER" id="PTHR20856">
    <property type="entry name" value="DNA-DIRECTED RNA POLYMERASE I SUBUNIT 2"/>
    <property type="match status" value="1"/>
</dbReference>
<dbReference type="Pfam" id="PF04563">
    <property type="entry name" value="RNA_pol_Rpb2_1"/>
    <property type="match status" value="1"/>
</dbReference>
<dbReference type="Pfam" id="PF04565">
    <property type="entry name" value="RNA_pol_Rpb2_3"/>
    <property type="match status" value="1"/>
</dbReference>
<dbReference type="Pfam" id="PF10385">
    <property type="entry name" value="RNA_pol_Rpb2_45"/>
    <property type="match status" value="1"/>
</dbReference>
<dbReference type="Pfam" id="PF00562">
    <property type="entry name" value="RNA_pol_Rpb2_6"/>
    <property type="match status" value="1"/>
</dbReference>
<dbReference type="Pfam" id="PF04560">
    <property type="entry name" value="RNA_pol_Rpb2_7"/>
    <property type="match status" value="1"/>
</dbReference>
<dbReference type="SUPFAM" id="SSF64484">
    <property type="entry name" value="beta and beta-prime subunits of DNA dependent RNA-polymerase"/>
    <property type="match status" value="1"/>
</dbReference>
<dbReference type="PROSITE" id="PS01166">
    <property type="entry name" value="RNA_POL_BETA"/>
    <property type="match status" value="1"/>
</dbReference>
<name>RPOB_THEP1</name>
<protein>
    <recommendedName>
        <fullName evidence="1">DNA-directed RNA polymerase subunit beta</fullName>
        <shortName evidence="1">RNAP subunit beta</shortName>
        <ecNumber evidence="1">2.7.7.6</ecNumber>
    </recommendedName>
    <alternativeName>
        <fullName evidence="1">RNA polymerase subunit beta</fullName>
    </alternativeName>
    <alternativeName>
        <fullName evidence="1">Transcriptase subunit beta</fullName>
    </alternativeName>
</protein>
<feature type="chain" id="PRO_0000329195" description="DNA-directed RNA polymerase subunit beta">
    <location>
        <begin position="1"/>
        <end position="1263"/>
    </location>
</feature>
<organism>
    <name type="scientific">Thermotoga petrophila (strain ATCC BAA-488 / DSM 13995 / JCM 10881 / RKU-1)</name>
    <dbReference type="NCBI Taxonomy" id="390874"/>
    <lineage>
        <taxon>Bacteria</taxon>
        <taxon>Thermotogati</taxon>
        <taxon>Thermotogota</taxon>
        <taxon>Thermotogae</taxon>
        <taxon>Thermotogales</taxon>
        <taxon>Thermotogaceae</taxon>
        <taxon>Thermotoga</taxon>
    </lineage>
</organism>
<keyword id="KW-0240">DNA-directed RNA polymerase</keyword>
<keyword id="KW-0548">Nucleotidyltransferase</keyword>
<keyword id="KW-0804">Transcription</keyword>
<keyword id="KW-0808">Transferase</keyword>
<gene>
    <name evidence="1" type="primary">rpoB</name>
    <name type="ordered locus">Tpet_0462</name>
</gene>
<reference key="1">
    <citation type="submission" date="2007-05" db="EMBL/GenBank/DDBJ databases">
        <title>Complete sequence of Thermotoga petrophila RKU-1.</title>
        <authorList>
            <consortium name="US DOE Joint Genome Institute"/>
            <person name="Copeland A."/>
            <person name="Lucas S."/>
            <person name="Lapidus A."/>
            <person name="Barry K."/>
            <person name="Glavina del Rio T."/>
            <person name="Dalin E."/>
            <person name="Tice H."/>
            <person name="Pitluck S."/>
            <person name="Sims D."/>
            <person name="Brettin T."/>
            <person name="Bruce D."/>
            <person name="Detter J.C."/>
            <person name="Han C."/>
            <person name="Tapia R."/>
            <person name="Schmutz J."/>
            <person name="Larimer F."/>
            <person name="Land M."/>
            <person name="Hauser L."/>
            <person name="Kyrpides N."/>
            <person name="Mikhailova N."/>
            <person name="Nelson K."/>
            <person name="Gogarten J.P."/>
            <person name="Noll K."/>
            <person name="Richardson P."/>
        </authorList>
    </citation>
    <scope>NUCLEOTIDE SEQUENCE [LARGE SCALE GENOMIC DNA]</scope>
    <source>
        <strain>ATCC BAA-488 / DSM 13995 / JCM 10881 / RKU-1</strain>
    </source>
</reference>
<proteinExistence type="inferred from homology"/>